<feature type="chain" id="PRO_0000290868" description="Small ribosomal subunit protein uS8">
    <location>
        <begin position="1"/>
        <end position="132"/>
    </location>
</feature>
<evidence type="ECO:0000255" key="1">
    <source>
        <dbReference type="HAMAP-Rule" id="MF_01302"/>
    </source>
</evidence>
<evidence type="ECO:0000305" key="2"/>
<proteinExistence type="inferred from homology"/>
<comment type="function">
    <text evidence="1">One of the primary rRNA binding proteins, it binds directly to 16S rRNA central domain where it helps coordinate assembly of the platform of the 30S subunit.</text>
</comment>
<comment type="subunit">
    <text evidence="1">Part of the 30S ribosomal subunit. Contacts proteins S5 and S12.</text>
</comment>
<comment type="similarity">
    <text evidence="1">Belongs to the universal ribosomal protein uS8 family.</text>
</comment>
<dbReference type="EMBL" id="CP000414">
    <property type="protein sequence ID" value="ABJ61340.1"/>
    <property type="molecule type" value="Genomic_DNA"/>
</dbReference>
<dbReference type="RefSeq" id="WP_002816023.1">
    <property type="nucleotide sequence ID" value="NC_008531.1"/>
</dbReference>
<dbReference type="SMR" id="Q03ZN2"/>
<dbReference type="EnsemblBacteria" id="ABJ61340">
    <property type="protein sequence ID" value="ABJ61340"/>
    <property type="gene ID" value="LEUM_0209"/>
</dbReference>
<dbReference type="GeneID" id="97504968"/>
<dbReference type="KEGG" id="lme:LEUM_0209"/>
<dbReference type="eggNOG" id="COG0096">
    <property type="taxonomic scope" value="Bacteria"/>
</dbReference>
<dbReference type="HOGENOM" id="CLU_098428_0_2_9"/>
<dbReference type="Proteomes" id="UP000000362">
    <property type="component" value="Chromosome"/>
</dbReference>
<dbReference type="GO" id="GO:1990904">
    <property type="term" value="C:ribonucleoprotein complex"/>
    <property type="evidence" value="ECO:0007669"/>
    <property type="project" value="UniProtKB-KW"/>
</dbReference>
<dbReference type="GO" id="GO:0005840">
    <property type="term" value="C:ribosome"/>
    <property type="evidence" value="ECO:0007669"/>
    <property type="project" value="UniProtKB-KW"/>
</dbReference>
<dbReference type="GO" id="GO:0019843">
    <property type="term" value="F:rRNA binding"/>
    <property type="evidence" value="ECO:0007669"/>
    <property type="project" value="UniProtKB-UniRule"/>
</dbReference>
<dbReference type="GO" id="GO:0003735">
    <property type="term" value="F:structural constituent of ribosome"/>
    <property type="evidence" value="ECO:0007669"/>
    <property type="project" value="InterPro"/>
</dbReference>
<dbReference type="GO" id="GO:0006412">
    <property type="term" value="P:translation"/>
    <property type="evidence" value="ECO:0007669"/>
    <property type="project" value="UniProtKB-UniRule"/>
</dbReference>
<dbReference type="FunFam" id="3.30.1370.30:FF:000002">
    <property type="entry name" value="30S ribosomal protein S8"/>
    <property type="match status" value="1"/>
</dbReference>
<dbReference type="FunFam" id="3.30.1490.10:FF:000001">
    <property type="entry name" value="30S ribosomal protein S8"/>
    <property type="match status" value="1"/>
</dbReference>
<dbReference type="Gene3D" id="3.30.1370.30">
    <property type="match status" value="1"/>
</dbReference>
<dbReference type="Gene3D" id="3.30.1490.10">
    <property type="match status" value="1"/>
</dbReference>
<dbReference type="HAMAP" id="MF_01302_B">
    <property type="entry name" value="Ribosomal_uS8_B"/>
    <property type="match status" value="1"/>
</dbReference>
<dbReference type="InterPro" id="IPR000630">
    <property type="entry name" value="Ribosomal_uS8"/>
</dbReference>
<dbReference type="InterPro" id="IPR047863">
    <property type="entry name" value="Ribosomal_uS8_CS"/>
</dbReference>
<dbReference type="InterPro" id="IPR035987">
    <property type="entry name" value="Ribosomal_uS8_sf"/>
</dbReference>
<dbReference type="NCBIfam" id="NF001109">
    <property type="entry name" value="PRK00136.1"/>
    <property type="match status" value="1"/>
</dbReference>
<dbReference type="PANTHER" id="PTHR11758">
    <property type="entry name" value="40S RIBOSOMAL PROTEIN S15A"/>
    <property type="match status" value="1"/>
</dbReference>
<dbReference type="Pfam" id="PF00410">
    <property type="entry name" value="Ribosomal_S8"/>
    <property type="match status" value="1"/>
</dbReference>
<dbReference type="SUPFAM" id="SSF56047">
    <property type="entry name" value="Ribosomal protein S8"/>
    <property type="match status" value="1"/>
</dbReference>
<dbReference type="PROSITE" id="PS00053">
    <property type="entry name" value="RIBOSOMAL_S8"/>
    <property type="match status" value="1"/>
</dbReference>
<name>RS8_LEUMM</name>
<reference key="1">
    <citation type="journal article" date="2006" name="Proc. Natl. Acad. Sci. U.S.A.">
        <title>Comparative genomics of the lactic acid bacteria.</title>
        <authorList>
            <person name="Makarova K.S."/>
            <person name="Slesarev A."/>
            <person name="Wolf Y.I."/>
            <person name="Sorokin A."/>
            <person name="Mirkin B."/>
            <person name="Koonin E.V."/>
            <person name="Pavlov A."/>
            <person name="Pavlova N."/>
            <person name="Karamychev V."/>
            <person name="Polouchine N."/>
            <person name="Shakhova V."/>
            <person name="Grigoriev I."/>
            <person name="Lou Y."/>
            <person name="Rohksar D."/>
            <person name="Lucas S."/>
            <person name="Huang K."/>
            <person name="Goodstein D.M."/>
            <person name="Hawkins T."/>
            <person name="Plengvidhya V."/>
            <person name="Welker D."/>
            <person name="Hughes J."/>
            <person name="Goh Y."/>
            <person name="Benson A."/>
            <person name="Baldwin K."/>
            <person name="Lee J.-H."/>
            <person name="Diaz-Muniz I."/>
            <person name="Dosti B."/>
            <person name="Smeianov V."/>
            <person name="Wechter W."/>
            <person name="Barabote R."/>
            <person name="Lorca G."/>
            <person name="Altermann E."/>
            <person name="Barrangou R."/>
            <person name="Ganesan B."/>
            <person name="Xie Y."/>
            <person name="Rawsthorne H."/>
            <person name="Tamir D."/>
            <person name="Parker C."/>
            <person name="Breidt F."/>
            <person name="Broadbent J.R."/>
            <person name="Hutkins R."/>
            <person name="O'Sullivan D."/>
            <person name="Steele J."/>
            <person name="Unlu G."/>
            <person name="Saier M.H. Jr."/>
            <person name="Klaenhammer T."/>
            <person name="Richardson P."/>
            <person name="Kozyavkin S."/>
            <person name="Weimer B.C."/>
            <person name="Mills D.A."/>
        </authorList>
    </citation>
    <scope>NUCLEOTIDE SEQUENCE [LARGE SCALE GENOMIC DNA]</scope>
    <source>
        <strain>ATCC 8293 / DSM 20343 / BCRC 11652 / CCM 1803 / JCM 6124 / NCDO 523 / NBRC 100496 / NCIMB 8023 / NCTC 12954 / NRRL B-1118 / 37Y</strain>
    </source>
</reference>
<keyword id="KW-1185">Reference proteome</keyword>
<keyword id="KW-0687">Ribonucleoprotein</keyword>
<keyword id="KW-0689">Ribosomal protein</keyword>
<keyword id="KW-0694">RNA-binding</keyword>
<keyword id="KW-0699">rRNA-binding</keyword>
<accession>Q03ZN2</accession>
<protein>
    <recommendedName>
        <fullName evidence="1">Small ribosomal subunit protein uS8</fullName>
    </recommendedName>
    <alternativeName>
        <fullName evidence="2">30S ribosomal protein S8</fullName>
    </alternativeName>
</protein>
<organism>
    <name type="scientific">Leuconostoc mesenteroides subsp. mesenteroides (strain ATCC 8293 / DSM 20343 / BCRC 11652 / CCM 1803 / JCM 6124 / NCDO 523 / NBRC 100496 / NCIMB 8023 / NCTC 12954 / NRRL B-1118 / 37Y)</name>
    <dbReference type="NCBI Taxonomy" id="203120"/>
    <lineage>
        <taxon>Bacteria</taxon>
        <taxon>Bacillati</taxon>
        <taxon>Bacillota</taxon>
        <taxon>Bacilli</taxon>
        <taxon>Lactobacillales</taxon>
        <taxon>Lactobacillaceae</taxon>
        <taxon>Leuconostoc</taxon>
    </lineage>
</organism>
<sequence>MSMTDPIADFLTRVRNANLARHEVVEAPASKIKKSIAEILKAEGFIRDFEYIDDNKQGVIRVFLKYGEDRNRVITGIQRISKPGLRKYAKAEELPKVLNGLGIAIISTSAGVITDKEARSKQVGGEVIAYVW</sequence>
<gene>
    <name evidence="1" type="primary">rpsH</name>
    <name type="ordered locus">LEUM_0209</name>
</gene>